<accession>Q4R3Q6</accession>
<name>THAP1_MACFA</name>
<evidence type="ECO:0000250" key="1"/>
<evidence type="ECO:0000255" key="2">
    <source>
        <dbReference type="PROSITE-ProRule" id="PRU00309"/>
    </source>
</evidence>
<evidence type="ECO:0000305" key="3"/>
<gene>
    <name type="primary">THAP1</name>
    <name type="ORF">QtsA-15008</name>
</gene>
<reference key="1">
    <citation type="submission" date="2005-06" db="EMBL/GenBank/DDBJ databases">
        <title>DNA sequences of macaque genes expressed in brain or testis and its evolutionary implications.</title>
        <authorList>
            <consortium name="International consortium for macaque cDNA sequencing and analysis"/>
        </authorList>
    </citation>
    <scope>NUCLEOTIDE SEQUENCE [LARGE SCALE MRNA]</scope>
    <source>
        <tissue>Testis</tissue>
    </source>
</reference>
<keyword id="KW-0131">Cell cycle</keyword>
<keyword id="KW-0175">Coiled coil</keyword>
<keyword id="KW-0238">DNA-binding</keyword>
<keyword id="KW-0479">Metal-binding</keyword>
<keyword id="KW-0539">Nucleus</keyword>
<keyword id="KW-1185">Reference proteome</keyword>
<keyword id="KW-0804">Transcription</keyword>
<keyword id="KW-0805">Transcription regulation</keyword>
<keyword id="KW-0862">Zinc</keyword>
<keyword id="KW-0863">Zinc-finger</keyword>
<dbReference type="EMBL" id="AB179209">
    <property type="protein sequence ID" value="BAE02260.1"/>
    <property type="molecule type" value="mRNA"/>
</dbReference>
<dbReference type="RefSeq" id="NP_001271632.1">
    <property type="nucleotide sequence ID" value="NM_001284703.1"/>
</dbReference>
<dbReference type="BMRB" id="Q4R3Q6"/>
<dbReference type="SMR" id="Q4R3Q6"/>
<dbReference type="STRING" id="9541.ENSMFAP00000015597"/>
<dbReference type="eggNOG" id="KOG1721">
    <property type="taxonomic scope" value="Eukaryota"/>
</dbReference>
<dbReference type="Proteomes" id="UP000233100">
    <property type="component" value="Unplaced"/>
</dbReference>
<dbReference type="GO" id="GO:0005634">
    <property type="term" value="C:nucleus"/>
    <property type="evidence" value="ECO:0000250"/>
    <property type="project" value="UniProtKB"/>
</dbReference>
<dbReference type="GO" id="GO:0016605">
    <property type="term" value="C:PML body"/>
    <property type="evidence" value="ECO:0007669"/>
    <property type="project" value="UniProtKB-SubCell"/>
</dbReference>
<dbReference type="GO" id="GO:0003700">
    <property type="term" value="F:DNA-binding transcription factor activity"/>
    <property type="evidence" value="ECO:0007669"/>
    <property type="project" value="TreeGrafter"/>
</dbReference>
<dbReference type="GO" id="GO:0042803">
    <property type="term" value="F:protein homodimerization activity"/>
    <property type="evidence" value="ECO:0000250"/>
    <property type="project" value="UniProtKB"/>
</dbReference>
<dbReference type="GO" id="GO:0000978">
    <property type="term" value="F:RNA polymerase II cis-regulatory region sequence-specific DNA binding"/>
    <property type="evidence" value="ECO:0007669"/>
    <property type="project" value="TreeGrafter"/>
</dbReference>
<dbReference type="GO" id="GO:0043565">
    <property type="term" value="F:sequence-specific DNA binding"/>
    <property type="evidence" value="ECO:0000250"/>
    <property type="project" value="UniProtKB"/>
</dbReference>
<dbReference type="GO" id="GO:0008270">
    <property type="term" value="F:zinc ion binding"/>
    <property type="evidence" value="ECO:0000250"/>
    <property type="project" value="UniProtKB"/>
</dbReference>
<dbReference type="GO" id="GO:0006351">
    <property type="term" value="P:DNA-templated transcription"/>
    <property type="evidence" value="ECO:0000250"/>
    <property type="project" value="UniProtKB"/>
</dbReference>
<dbReference type="GO" id="GO:0001935">
    <property type="term" value="P:endothelial cell proliferation"/>
    <property type="evidence" value="ECO:0000250"/>
    <property type="project" value="UniProtKB"/>
</dbReference>
<dbReference type="GO" id="GO:0006355">
    <property type="term" value="P:regulation of DNA-templated transcription"/>
    <property type="evidence" value="ECO:0000250"/>
    <property type="project" value="UniProtKB"/>
</dbReference>
<dbReference type="GO" id="GO:0007346">
    <property type="term" value="P:regulation of mitotic cell cycle"/>
    <property type="evidence" value="ECO:0000250"/>
    <property type="project" value="UniProtKB"/>
</dbReference>
<dbReference type="GO" id="GO:0006357">
    <property type="term" value="P:regulation of transcription by RNA polymerase II"/>
    <property type="evidence" value="ECO:0007669"/>
    <property type="project" value="TreeGrafter"/>
</dbReference>
<dbReference type="Gene3D" id="6.20.210.20">
    <property type="entry name" value="THAP domain"/>
    <property type="match status" value="1"/>
</dbReference>
<dbReference type="InterPro" id="IPR026516">
    <property type="entry name" value="THAP1/10"/>
</dbReference>
<dbReference type="InterPro" id="IPR006612">
    <property type="entry name" value="THAP_Znf"/>
</dbReference>
<dbReference type="InterPro" id="IPR038441">
    <property type="entry name" value="THAP_Znf_sf"/>
</dbReference>
<dbReference type="PANTHER" id="PTHR46600">
    <property type="entry name" value="THAP DOMAIN-CONTAINING"/>
    <property type="match status" value="1"/>
</dbReference>
<dbReference type="PANTHER" id="PTHR46600:SF1">
    <property type="entry name" value="THAP DOMAIN-CONTAINING PROTEIN 1"/>
    <property type="match status" value="1"/>
</dbReference>
<dbReference type="Pfam" id="PF05485">
    <property type="entry name" value="THAP"/>
    <property type="match status" value="1"/>
</dbReference>
<dbReference type="SMART" id="SM00692">
    <property type="entry name" value="DM3"/>
    <property type="match status" value="1"/>
</dbReference>
<dbReference type="SMART" id="SM00980">
    <property type="entry name" value="THAP"/>
    <property type="match status" value="1"/>
</dbReference>
<dbReference type="SUPFAM" id="SSF57716">
    <property type="entry name" value="Glucocorticoid receptor-like (DNA-binding domain)"/>
    <property type="match status" value="1"/>
</dbReference>
<dbReference type="PROSITE" id="PS50950">
    <property type="entry name" value="ZF_THAP"/>
    <property type="match status" value="1"/>
</dbReference>
<feature type="chain" id="PRO_0000068638" description="THAP domain-containing protein 1">
    <location>
        <begin position="1"/>
        <end position="212"/>
    </location>
</feature>
<feature type="zinc finger region" description="THAP-type" evidence="2">
    <location>
        <begin position="5"/>
        <end position="57"/>
    </location>
</feature>
<feature type="coiled-coil region" evidence="1">
    <location>
        <begin position="138"/>
        <end position="189"/>
    </location>
</feature>
<feature type="short sequence motif" description="HCFC1-binding motif (HBM)" evidence="1">
    <location>
        <begin position="133"/>
        <end position="136"/>
    </location>
</feature>
<comment type="function">
    <text evidence="1">DNA-binding transcription regulator that regulates endothelial cell proliferation and G1/S cell-cycle progression. Specifically binds the 5'-[AT]NTNN[GT]GGCA[AGT]-3' core DNA sequence and acts by modulating expression of pRB-E2F cell-cycle target genes, including RRM1. Component of a THAP1/THAP3-HCFC1-OGT complex that is required for the regulation of the transcriptional activity of RRM1. May also have pro-apoptotic activity by potentiating both serum-withdrawal and TNF-induced apoptosis (By similarity).</text>
</comment>
<comment type="subunit">
    <text evidence="1">Interacts with PAWR. Component of a THAP1/THAP3-HCFC1-OGT complex that contains, either THAP1 or THAP3, HCFC1 and OGT. Interacts with OGT. Interacts (via the HBM) with HCFC1 (via the Kelch-repeat domain); the interaction recruits HCFC1 to the RRM1 promoter (By similarity).</text>
</comment>
<comment type="subcellular location">
    <subcellularLocation>
        <location evidence="1">Nucleus</location>
        <location evidence="1">Nucleoplasm</location>
    </subcellularLocation>
    <subcellularLocation>
        <location evidence="1">Nucleus</location>
        <location evidence="1">PML body</location>
    </subcellularLocation>
</comment>
<comment type="similarity">
    <text evidence="3">Belongs to the THAP1 family.</text>
</comment>
<sequence length="212" mass="24840">MVQPCSAYGCKNRYDKDKPVSFHKFPLTRPSLCKEWEAAVRRKNFKPTKYSSICSEHFTPDCFKRECNNKLLKENAVPTIFLCTEPHDKKEDLEPQEQLPPPPLPPPVSQVDAAIGLLMPPLQTPVNLSVFCDHNYTVEDTMHQRKRIHQLEQQVEKLRKKLKTAQQRCRRQERQLEKLKEVVHFQKEKDNVSERGYVILPNDYFEIVEVPA</sequence>
<proteinExistence type="evidence at transcript level"/>
<organism>
    <name type="scientific">Macaca fascicularis</name>
    <name type="common">Crab-eating macaque</name>
    <name type="synonym">Cynomolgus monkey</name>
    <dbReference type="NCBI Taxonomy" id="9541"/>
    <lineage>
        <taxon>Eukaryota</taxon>
        <taxon>Metazoa</taxon>
        <taxon>Chordata</taxon>
        <taxon>Craniata</taxon>
        <taxon>Vertebrata</taxon>
        <taxon>Euteleostomi</taxon>
        <taxon>Mammalia</taxon>
        <taxon>Eutheria</taxon>
        <taxon>Euarchontoglires</taxon>
        <taxon>Primates</taxon>
        <taxon>Haplorrhini</taxon>
        <taxon>Catarrhini</taxon>
        <taxon>Cercopithecidae</taxon>
        <taxon>Cercopithecinae</taxon>
        <taxon>Macaca</taxon>
    </lineage>
</organism>
<protein>
    <recommendedName>
        <fullName>THAP domain-containing protein 1</fullName>
    </recommendedName>
</protein>